<evidence type="ECO:0000255" key="1">
    <source>
        <dbReference type="HAMAP-Rule" id="MF_00445"/>
    </source>
</evidence>
<gene>
    <name evidence="1" type="primary">nuoN</name>
    <name type="ordered locus">MAB_2147</name>
</gene>
<protein>
    <recommendedName>
        <fullName evidence="1">NADH-quinone oxidoreductase subunit N</fullName>
        <ecNumber evidence="1">7.1.1.-</ecNumber>
    </recommendedName>
    <alternativeName>
        <fullName evidence="1">NADH dehydrogenase I subunit N</fullName>
    </alternativeName>
    <alternativeName>
        <fullName evidence="1">NDH-1 subunit N</fullName>
    </alternativeName>
</protein>
<proteinExistence type="inferred from homology"/>
<comment type="function">
    <text evidence="1">NDH-1 shuttles electrons from NADH, via FMN and iron-sulfur (Fe-S) centers, to quinones in the respiratory chain. The immediate electron acceptor for the enzyme in this species is believed to be a menaquinone. Couples the redox reaction to proton translocation (for every two electrons transferred, four hydrogen ions are translocated across the cytoplasmic membrane), and thus conserves the redox energy in a proton gradient.</text>
</comment>
<comment type="catalytic activity">
    <reaction evidence="1">
        <text>a quinone + NADH + 5 H(+)(in) = a quinol + NAD(+) + 4 H(+)(out)</text>
        <dbReference type="Rhea" id="RHEA:57888"/>
        <dbReference type="ChEBI" id="CHEBI:15378"/>
        <dbReference type="ChEBI" id="CHEBI:24646"/>
        <dbReference type="ChEBI" id="CHEBI:57540"/>
        <dbReference type="ChEBI" id="CHEBI:57945"/>
        <dbReference type="ChEBI" id="CHEBI:132124"/>
    </reaction>
</comment>
<comment type="subunit">
    <text evidence="1">NDH-1 is composed of 14 different subunits. Subunits NuoA, H, J, K, L, M, N constitute the membrane sector of the complex.</text>
</comment>
<comment type="subcellular location">
    <subcellularLocation>
        <location evidence="1">Cell membrane</location>
        <topology evidence="1">Multi-pass membrane protein</topology>
    </subcellularLocation>
</comment>
<comment type="similarity">
    <text evidence="1">Belongs to the complex I subunit 2 family.</text>
</comment>
<reference key="1">
    <citation type="journal article" date="2009" name="PLoS ONE">
        <title>Non mycobacterial virulence genes in the genome of the emerging pathogen Mycobacterium abscessus.</title>
        <authorList>
            <person name="Ripoll F."/>
            <person name="Pasek S."/>
            <person name="Schenowitz C."/>
            <person name="Dossat C."/>
            <person name="Barbe V."/>
            <person name="Rottman M."/>
            <person name="Macheras E."/>
            <person name="Heym B."/>
            <person name="Herrmann J.L."/>
            <person name="Daffe M."/>
            <person name="Brosch R."/>
            <person name="Risler J.L."/>
            <person name="Gaillard J.L."/>
        </authorList>
    </citation>
    <scope>NUCLEOTIDE SEQUENCE [LARGE SCALE GENOMIC DNA]</scope>
    <source>
        <strain>ATCC 19977 / DSM 44196 / CCUG 20993 / CIP 104536 / JCM 13569 / NCTC 13031 / TMC 1543 / L948</strain>
    </source>
</reference>
<sequence length="538" mass="55912">MTDIGILPAPAIAYGALSPMLIMFGVAVVSVLVEAFVPRGHRLRTQLALATVGILGAFVAVVALSGSHQVVMNGAVAIDGPTLYLQGLILVASGLALVVMAQRRTVAAVPSAVGAGAGGGLDSFAAQASSVPGSEPERVLNRTGITQTEIFPLTLFAIAGMMLFPACNDLLTMFVALEVFSLPLYVMCALARRRRLLSQESALKYFLLGAFSSAFFLFGSAFVYGYAGTVELDAVARAVDADAGERSFLLLGVAMLSVGLLFKVGAVPFHFWVPDVYQGAPTPVTAFMAATTKIAAFGALLRVLYVALPGITTDWRPVLWGVAIATMLIGSIGAVTQTDVKRMLAYSAVAHTGFLLTGVAAANERGVSSTLFYLAAYGFSTVGAFIIAGLVRSGNADDGADGDYKDDDEVTDLRRWAGVGRRAPVLGIVFALFLLAFAGIPLTSGFVSKFAVFEAAAAGGAMPLVVVGVMCSAIAAYFYVRVIVVMFFADPVEDSGVLRIPGPAVTVSIAVSALITVLLGVAPQPLLDLVENLADFVT</sequence>
<name>NUON_MYCA9</name>
<keyword id="KW-1003">Cell membrane</keyword>
<keyword id="KW-0472">Membrane</keyword>
<keyword id="KW-0520">NAD</keyword>
<keyword id="KW-0874">Quinone</keyword>
<keyword id="KW-1185">Reference proteome</keyword>
<keyword id="KW-1278">Translocase</keyword>
<keyword id="KW-0812">Transmembrane</keyword>
<keyword id="KW-1133">Transmembrane helix</keyword>
<keyword id="KW-0813">Transport</keyword>
<organism>
    <name type="scientific">Mycobacteroides abscessus (strain ATCC 19977 / DSM 44196 / CCUG 20993 / CIP 104536 / JCM 13569 / NCTC 13031 / TMC 1543 / L948)</name>
    <name type="common">Mycobacterium abscessus</name>
    <dbReference type="NCBI Taxonomy" id="561007"/>
    <lineage>
        <taxon>Bacteria</taxon>
        <taxon>Bacillati</taxon>
        <taxon>Actinomycetota</taxon>
        <taxon>Actinomycetes</taxon>
        <taxon>Mycobacteriales</taxon>
        <taxon>Mycobacteriaceae</taxon>
        <taxon>Mycobacteroides</taxon>
        <taxon>Mycobacteroides abscessus</taxon>
    </lineage>
</organism>
<accession>B1MAF7</accession>
<feature type="chain" id="PRO_0000391182" description="NADH-quinone oxidoreductase subunit N">
    <location>
        <begin position="1"/>
        <end position="538"/>
    </location>
</feature>
<feature type="transmembrane region" description="Helical" evidence="1">
    <location>
        <begin position="12"/>
        <end position="32"/>
    </location>
</feature>
<feature type="transmembrane region" description="Helical" evidence="1">
    <location>
        <begin position="47"/>
        <end position="67"/>
    </location>
</feature>
<feature type="transmembrane region" description="Helical" evidence="1">
    <location>
        <begin position="81"/>
        <end position="101"/>
    </location>
</feature>
<feature type="transmembrane region" description="Helical" evidence="1">
    <location>
        <begin position="144"/>
        <end position="164"/>
    </location>
</feature>
<feature type="transmembrane region" description="Helical" evidence="1">
    <location>
        <begin position="170"/>
        <end position="190"/>
    </location>
</feature>
<feature type="transmembrane region" description="Helical" evidence="1">
    <location>
        <begin position="205"/>
        <end position="225"/>
    </location>
</feature>
<feature type="transmembrane region" description="Helical" evidence="1">
    <location>
        <begin position="248"/>
        <end position="268"/>
    </location>
</feature>
<feature type="transmembrane region" description="Helical" evidence="1">
    <location>
        <begin position="294"/>
        <end position="314"/>
    </location>
</feature>
<feature type="transmembrane region" description="Helical" evidence="1">
    <location>
        <begin position="317"/>
        <end position="337"/>
    </location>
</feature>
<feature type="transmembrane region" description="Helical" evidence="1">
    <location>
        <begin position="343"/>
        <end position="363"/>
    </location>
</feature>
<feature type="transmembrane region" description="Helical" evidence="1">
    <location>
        <begin position="371"/>
        <end position="391"/>
    </location>
</feature>
<feature type="transmembrane region" description="Helical" evidence="1">
    <location>
        <begin position="423"/>
        <end position="443"/>
    </location>
</feature>
<feature type="transmembrane region" description="Helical" evidence="1">
    <location>
        <begin position="472"/>
        <end position="492"/>
    </location>
</feature>
<feature type="transmembrane region" description="Helical" evidence="1">
    <location>
        <begin position="502"/>
        <end position="522"/>
    </location>
</feature>
<dbReference type="EC" id="7.1.1.-" evidence="1"/>
<dbReference type="EMBL" id="CU458896">
    <property type="protein sequence ID" value="CAM62228.1"/>
    <property type="molecule type" value="Genomic_DNA"/>
</dbReference>
<dbReference type="RefSeq" id="WP_005110666.1">
    <property type="nucleotide sequence ID" value="NZ_MLCG01000002.1"/>
</dbReference>
<dbReference type="SMR" id="B1MAF7"/>
<dbReference type="GeneID" id="93379083"/>
<dbReference type="KEGG" id="mab:MAB_2147"/>
<dbReference type="Proteomes" id="UP000007137">
    <property type="component" value="Chromosome"/>
</dbReference>
<dbReference type="GO" id="GO:0005886">
    <property type="term" value="C:plasma membrane"/>
    <property type="evidence" value="ECO:0007669"/>
    <property type="project" value="UniProtKB-SubCell"/>
</dbReference>
<dbReference type="GO" id="GO:0008137">
    <property type="term" value="F:NADH dehydrogenase (ubiquinone) activity"/>
    <property type="evidence" value="ECO:0007669"/>
    <property type="project" value="InterPro"/>
</dbReference>
<dbReference type="GO" id="GO:0050136">
    <property type="term" value="F:NADH:ubiquinone reductase (non-electrogenic) activity"/>
    <property type="evidence" value="ECO:0007669"/>
    <property type="project" value="UniProtKB-UniRule"/>
</dbReference>
<dbReference type="GO" id="GO:0048038">
    <property type="term" value="F:quinone binding"/>
    <property type="evidence" value="ECO:0007669"/>
    <property type="project" value="UniProtKB-KW"/>
</dbReference>
<dbReference type="GO" id="GO:0042773">
    <property type="term" value="P:ATP synthesis coupled electron transport"/>
    <property type="evidence" value="ECO:0007669"/>
    <property type="project" value="InterPro"/>
</dbReference>
<dbReference type="HAMAP" id="MF_00445">
    <property type="entry name" value="NDH1_NuoN_1"/>
    <property type="match status" value="1"/>
</dbReference>
<dbReference type="InterPro" id="IPR010096">
    <property type="entry name" value="NADH-Q_OxRdtase_suN/2"/>
</dbReference>
<dbReference type="InterPro" id="IPR001750">
    <property type="entry name" value="ND/Mrp_TM"/>
</dbReference>
<dbReference type="NCBIfam" id="TIGR01770">
    <property type="entry name" value="NDH_I_N"/>
    <property type="match status" value="1"/>
</dbReference>
<dbReference type="NCBIfam" id="NF004441">
    <property type="entry name" value="PRK05777.1-4"/>
    <property type="match status" value="1"/>
</dbReference>
<dbReference type="PANTHER" id="PTHR22773">
    <property type="entry name" value="NADH DEHYDROGENASE"/>
    <property type="match status" value="1"/>
</dbReference>
<dbReference type="Pfam" id="PF00361">
    <property type="entry name" value="Proton_antipo_M"/>
    <property type="match status" value="1"/>
</dbReference>